<reference key="1">
    <citation type="journal article" date="2000" name="Science">
        <title>The genome sequence of Drosophila melanogaster.</title>
        <authorList>
            <person name="Adams M.D."/>
            <person name="Celniker S.E."/>
            <person name="Holt R.A."/>
            <person name="Evans C.A."/>
            <person name="Gocayne J.D."/>
            <person name="Amanatides P.G."/>
            <person name="Scherer S.E."/>
            <person name="Li P.W."/>
            <person name="Hoskins R.A."/>
            <person name="Galle R.F."/>
            <person name="George R.A."/>
            <person name="Lewis S.E."/>
            <person name="Richards S."/>
            <person name="Ashburner M."/>
            <person name="Henderson S.N."/>
            <person name="Sutton G.G."/>
            <person name="Wortman J.R."/>
            <person name="Yandell M.D."/>
            <person name="Zhang Q."/>
            <person name="Chen L.X."/>
            <person name="Brandon R.C."/>
            <person name="Rogers Y.-H.C."/>
            <person name="Blazej R.G."/>
            <person name="Champe M."/>
            <person name="Pfeiffer B.D."/>
            <person name="Wan K.H."/>
            <person name="Doyle C."/>
            <person name="Baxter E.G."/>
            <person name="Helt G."/>
            <person name="Nelson C.R."/>
            <person name="Miklos G.L.G."/>
            <person name="Abril J.F."/>
            <person name="Agbayani A."/>
            <person name="An H.-J."/>
            <person name="Andrews-Pfannkoch C."/>
            <person name="Baldwin D."/>
            <person name="Ballew R.M."/>
            <person name="Basu A."/>
            <person name="Baxendale J."/>
            <person name="Bayraktaroglu L."/>
            <person name="Beasley E.M."/>
            <person name="Beeson K.Y."/>
            <person name="Benos P.V."/>
            <person name="Berman B.P."/>
            <person name="Bhandari D."/>
            <person name="Bolshakov S."/>
            <person name="Borkova D."/>
            <person name="Botchan M.R."/>
            <person name="Bouck J."/>
            <person name="Brokstein P."/>
            <person name="Brottier P."/>
            <person name="Burtis K.C."/>
            <person name="Busam D.A."/>
            <person name="Butler H."/>
            <person name="Cadieu E."/>
            <person name="Center A."/>
            <person name="Chandra I."/>
            <person name="Cherry J.M."/>
            <person name="Cawley S."/>
            <person name="Dahlke C."/>
            <person name="Davenport L.B."/>
            <person name="Davies P."/>
            <person name="de Pablos B."/>
            <person name="Delcher A."/>
            <person name="Deng Z."/>
            <person name="Mays A.D."/>
            <person name="Dew I."/>
            <person name="Dietz S.M."/>
            <person name="Dodson K."/>
            <person name="Doup L.E."/>
            <person name="Downes M."/>
            <person name="Dugan-Rocha S."/>
            <person name="Dunkov B.C."/>
            <person name="Dunn P."/>
            <person name="Durbin K.J."/>
            <person name="Evangelista C.C."/>
            <person name="Ferraz C."/>
            <person name="Ferriera S."/>
            <person name="Fleischmann W."/>
            <person name="Fosler C."/>
            <person name="Gabrielian A.E."/>
            <person name="Garg N.S."/>
            <person name="Gelbart W.M."/>
            <person name="Glasser K."/>
            <person name="Glodek A."/>
            <person name="Gong F."/>
            <person name="Gorrell J.H."/>
            <person name="Gu Z."/>
            <person name="Guan P."/>
            <person name="Harris M."/>
            <person name="Harris N.L."/>
            <person name="Harvey D.A."/>
            <person name="Heiman T.J."/>
            <person name="Hernandez J.R."/>
            <person name="Houck J."/>
            <person name="Hostin D."/>
            <person name="Houston K.A."/>
            <person name="Howland T.J."/>
            <person name="Wei M.-H."/>
            <person name="Ibegwam C."/>
            <person name="Jalali M."/>
            <person name="Kalush F."/>
            <person name="Karpen G.H."/>
            <person name="Ke Z."/>
            <person name="Kennison J.A."/>
            <person name="Ketchum K.A."/>
            <person name="Kimmel B.E."/>
            <person name="Kodira C.D."/>
            <person name="Kraft C.L."/>
            <person name="Kravitz S."/>
            <person name="Kulp D."/>
            <person name="Lai Z."/>
            <person name="Lasko P."/>
            <person name="Lei Y."/>
            <person name="Levitsky A.A."/>
            <person name="Li J.H."/>
            <person name="Li Z."/>
            <person name="Liang Y."/>
            <person name="Lin X."/>
            <person name="Liu X."/>
            <person name="Mattei B."/>
            <person name="McIntosh T.C."/>
            <person name="McLeod M.P."/>
            <person name="McPherson D."/>
            <person name="Merkulov G."/>
            <person name="Milshina N.V."/>
            <person name="Mobarry C."/>
            <person name="Morris J."/>
            <person name="Moshrefi A."/>
            <person name="Mount S.M."/>
            <person name="Moy M."/>
            <person name="Murphy B."/>
            <person name="Murphy L."/>
            <person name="Muzny D.M."/>
            <person name="Nelson D.L."/>
            <person name="Nelson D.R."/>
            <person name="Nelson K.A."/>
            <person name="Nixon K."/>
            <person name="Nusskern D.R."/>
            <person name="Pacleb J.M."/>
            <person name="Palazzolo M."/>
            <person name="Pittman G.S."/>
            <person name="Pan S."/>
            <person name="Pollard J."/>
            <person name="Puri V."/>
            <person name="Reese M.G."/>
            <person name="Reinert K."/>
            <person name="Remington K."/>
            <person name="Saunders R.D.C."/>
            <person name="Scheeler F."/>
            <person name="Shen H."/>
            <person name="Shue B.C."/>
            <person name="Siden-Kiamos I."/>
            <person name="Simpson M."/>
            <person name="Skupski M.P."/>
            <person name="Smith T.J."/>
            <person name="Spier E."/>
            <person name="Spradling A.C."/>
            <person name="Stapleton M."/>
            <person name="Strong R."/>
            <person name="Sun E."/>
            <person name="Svirskas R."/>
            <person name="Tector C."/>
            <person name="Turner R."/>
            <person name="Venter E."/>
            <person name="Wang A.H."/>
            <person name="Wang X."/>
            <person name="Wang Z.-Y."/>
            <person name="Wassarman D.A."/>
            <person name="Weinstock G.M."/>
            <person name="Weissenbach J."/>
            <person name="Williams S.M."/>
            <person name="Woodage T."/>
            <person name="Worley K.C."/>
            <person name="Wu D."/>
            <person name="Yang S."/>
            <person name="Yao Q.A."/>
            <person name="Ye J."/>
            <person name="Yeh R.-F."/>
            <person name="Zaveri J.S."/>
            <person name="Zhan M."/>
            <person name="Zhang G."/>
            <person name="Zhao Q."/>
            <person name="Zheng L."/>
            <person name="Zheng X.H."/>
            <person name="Zhong F.N."/>
            <person name="Zhong W."/>
            <person name="Zhou X."/>
            <person name="Zhu S.C."/>
            <person name="Zhu X."/>
            <person name="Smith H.O."/>
            <person name="Gibbs R.A."/>
            <person name="Myers E.W."/>
            <person name="Rubin G.M."/>
            <person name="Venter J.C."/>
        </authorList>
    </citation>
    <scope>NUCLEOTIDE SEQUENCE [LARGE SCALE GENOMIC DNA]</scope>
    <source>
        <strain>Berkeley</strain>
    </source>
</reference>
<reference key="2">
    <citation type="journal article" date="2002" name="Genome Biol.">
        <title>Annotation of the Drosophila melanogaster euchromatic genome: a systematic review.</title>
        <authorList>
            <person name="Misra S."/>
            <person name="Crosby M.A."/>
            <person name="Mungall C.J."/>
            <person name="Matthews B.B."/>
            <person name="Campbell K.S."/>
            <person name="Hradecky P."/>
            <person name="Huang Y."/>
            <person name="Kaminker J.S."/>
            <person name="Millburn G.H."/>
            <person name="Prochnik S.E."/>
            <person name="Smith C.D."/>
            <person name="Tupy J.L."/>
            <person name="Whitfield E.J."/>
            <person name="Bayraktaroglu L."/>
            <person name="Berman B.P."/>
            <person name="Bettencourt B.R."/>
            <person name="Celniker S.E."/>
            <person name="de Grey A.D.N.J."/>
            <person name="Drysdale R.A."/>
            <person name="Harris N.L."/>
            <person name="Richter J."/>
            <person name="Russo S."/>
            <person name="Schroeder A.J."/>
            <person name="Shu S.Q."/>
            <person name="Stapleton M."/>
            <person name="Yamada C."/>
            <person name="Ashburner M."/>
            <person name="Gelbart W.M."/>
            <person name="Rubin G.M."/>
            <person name="Lewis S.E."/>
        </authorList>
    </citation>
    <scope>GENOME REANNOTATION</scope>
    <source>
        <strain>Berkeley</strain>
    </source>
</reference>
<keyword id="KW-0472">Membrane</keyword>
<keyword id="KW-1185">Reference proteome</keyword>
<keyword id="KW-0812">Transmembrane</keyword>
<keyword id="KW-1133">Transmembrane helix</keyword>
<sequence length="227" mass="24654">MAHKRLFVYAVLLVICYLVGVTWAETAAQTFPAIGTNSNNNSNAQPAPVPAPAAPAAAAPLAKQVSAPTAAPPAKVIGQPVLAAPGKNSSNSSSTTECVCAGALLPRLDANGKELPICAECKCSHVARNTTLIKVVVIIVIWIISILVIYMLFLMCLDPLLNKRVKANYQEHTNEDDEPTPPLPAVNNQELSARANVLNRVGHQQDKWKRQVREQRRHIYDRHTMLN</sequence>
<accession>Q9VNA4</accession>
<dbReference type="EMBL" id="AE014297">
    <property type="protein sequence ID" value="AAF52042.1"/>
    <property type="molecule type" value="Genomic_DNA"/>
</dbReference>
<dbReference type="RefSeq" id="NP_649528.2">
    <property type="nucleotide sequence ID" value="NM_141271.3"/>
</dbReference>
<dbReference type="BioGRID" id="65849">
    <property type="interactions" value="13"/>
</dbReference>
<dbReference type="FunCoup" id="Q9VNA4">
    <property type="interactions" value="983"/>
</dbReference>
<dbReference type="IntAct" id="Q9VNA4">
    <property type="interactions" value="13"/>
</dbReference>
<dbReference type="STRING" id="7227.FBpp0078431"/>
<dbReference type="GlyGen" id="Q9VNA4">
    <property type="glycosylation" value="1 site"/>
</dbReference>
<dbReference type="DNASU" id="40638"/>
<dbReference type="EnsemblMetazoa" id="FBtr0078785">
    <property type="protein sequence ID" value="FBpp0078431"/>
    <property type="gene ID" value="FBgn0037313"/>
</dbReference>
<dbReference type="GeneID" id="40638"/>
<dbReference type="KEGG" id="dme:Dmel_CG1161"/>
<dbReference type="UCSC" id="CG1161-RA">
    <property type="organism name" value="d. melanogaster"/>
</dbReference>
<dbReference type="AGR" id="FB:FBgn0037313"/>
<dbReference type="FlyBase" id="FBgn0037313">
    <property type="gene designation" value="CG1161"/>
</dbReference>
<dbReference type="VEuPathDB" id="VectorBase:FBgn0037313"/>
<dbReference type="GeneTree" id="ENSGT00390000000819"/>
<dbReference type="HOGENOM" id="CLU_1046871_0_0_1"/>
<dbReference type="InParanoid" id="Q9VNA4"/>
<dbReference type="OMA" id="KHSRYKG"/>
<dbReference type="OrthoDB" id="10059035at2759"/>
<dbReference type="PhylomeDB" id="Q9VNA4"/>
<dbReference type="BioGRID-ORCS" id="40638">
    <property type="hits" value="0 hits in 3 CRISPR screens"/>
</dbReference>
<dbReference type="GenomeRNAi" id="40638"/>
<dbReference type="PRO" id="PR:Q9VNA4"/>
<dbReference type="Proteomes" id="UP000000803">
    <property type="component" value="Chromosome 3R"/>
</dbReference>
<dbReference type="Bgee" id="FBgn0037313">
    <property type="expression patterns" value="Expressed in adult middle midgut class I enteroendocrine cell in adult midgut (Drosophila) and 254 other cell types or tissues"/>
</dbReference>
<dbReference type="ExpressionAtlas" id="Q9VNA4">
    <property type="expression patterns" value="baseline and differential"/>
</dbReference>
<dbReference type="GO" id="GO:0005765">
    <property type="term" value="C:lysosomal membrane"/>
    <property type="evidence" value="ECO:0007669"/>
    <property type="project" value="InterPro"/>
</dbReference>
<dbReference type="InterPro" id="IPR008853">
    <property type="entry name" value="TMEM9/TMEM9B"/>
</dbReference>
<dbReference type="PANTHER" id="PTHR13064:SF6">
    <property type="entry name" value="TRANSMEMBRANE PROTEIN 9"/>
    <property type="match status" value="1"/>
</dbReference>
<dbReference type="PANTHER" id="PTHR13064">
    <property type="entry name" value="TRANSMEMBRANE PROTEIN 9 FAMILY MEMBER"/>
    <property type="match status" value="1"/>
</dbReference>
<dbReference type="Pfam" id="PF05434">
    <property type="entry name" value="Tmemb_9"/>
    <property type="match status" value="1"/>
</dbReference>
<name>Y1161_DROME</name>
<proteinExistence type="inferred from homology"/>
<gene>
    <name type="ORF">CG1161</name>
</gene>
<comment type="subcellular location">
    <subcellularLocation>
        <location evidence="2">Membrane</location>
        <topology evidence="2">Multi-pass membrane protein</topology>
    </subcellularLocation>
</comment>
<comment type="similarity">
    <text evidence="2">Belongs to the TMEM9 family.</text>
</comment>
<organism>
    <name type="scientific">Drosophila melanogaster</name>
    <name type="common">Fruit fly</name>
    <dbReference type="NCBI Taxonomy" id="7227"/>
    <lineage>
        <taxon>Eukaryota</taxon>
        <taxon>Metazoa</taxon>
        <taxon>Ecdysozoa</taxon>
        <taxon>Arthropoda</taxon>
        <taxon>Hexapoda</taxon>
        <taxon>Insecta</taxon>
        <taxon>Pterygota</taxon>
        <taxon>Neoptera</taxon>
        <taxon>Endopterygota</taxon>
        <taxon>Diptera</taxon>
        <taxon>Brachycera</taxon>
        <taxon>Muscomorpha</taxon>
        <taxon>Ephydroidea</taxon>
        <taxon>Drosophilidae</taxon>
        <taxon>Drosophila</taxon>
        <taxon>Sophophora</taxon>
    </lineage>
</organism>
<protein>
    <recommendedName>
        <fullName>Uncharacterized protein CG1161</fullName>
    </recommendedName>
</protein>
<feature type="chain" id="PRO_0000221040" description="Uncharacterized protein CG1161">
    <location>
        <begin position="1"/>
        <end position="227"/>
    </location>
</feature>
<feature type="transmembrane region" description="Helical" evidence="1">
    <location>
        <begin position="7"/>
        <end position="24"/>
    </location>
</feature>
<feature type="transmembrane region" description="Helical" evidence="1">
    <location>
        <begin position="135"/>
        <end position="157"/>
    </location>
</feature>
<evidence type="ECO:0000255" key="1"/>
<evidence type="ECO:0000305" key="2"/>